<feature type="initiator methionine" description="Removed" evidence="1">
    <location>
        <position position="1"/>
    </location>
</feature>
<feature type="chain" id="PRO_0000427189" description="Glutamine--fructose-6-phosphate aminotransferase [isomerizing]">
    <location>
        <begin position="2"/>
        <end position="624"/>
    </location>
</feature>
<feature type="domain" description="Glutamine amidotransferase type-2" evidence="1">
    <location>
        <begin position="2"/>
        <end position="225"/>
    </location>
</feature>
<feature type="domain" description="SIS 1" evidence="1">
    <location>
        <begin position="297"/>
        <end position="436"/>
    </location>
</feature>
<feature type="domain" description="SIS 2" evidence="1">
    <location>
        <begin position="469"/>
        <end position="614"/>
    </location>
</feature>
<feature type="active site" description="Nucleophile; for GATase activity" evidence="1">
    <location>
        <position position="2"/>
    </location>
</feature>
<feature type="active site" description="For Fru-6P isomerization activity" evidence="1">
    <location>
        <position position="619"/>
    </location>
</feature>
<accession>P9WN48</accession>
<accession>L0TCI8</accession>
<accession>O06253</accession>
<accession>O33274</accession>
<accession>P0A588</accession>
<comment type="function">
    <text evidence="1">Catalyzes the first step in hexosamine metabolism, converting fructose-6P into glucosamine-6P using glutamine as a nitrogen source.</text>
</comment>
<comment type="catalytic activity">
    <reaction evidence="1">
        <text>D-fructose 6-phosphate + L-glutamine = D-glucosamine 6-phosphate + L-glutamate</text>
        <dbReference type="Rhea" id="RHEA:13237"/>
        <dbReference type="ChEBI" id="CHEBI:29985"/>
        <dbReference type="ChEBI" id="CHEBI:58359"/>
        <dbReference type="ChEBI" id="CHEBI:58725"/>
        <dbReference type="ChEBI" id="CHEBI:61527"/>
        <dbReference type="EC" id="2.6.1.16"/>
    </reaction>
</comment>
<comment type="subunit">
    <text evidence="1">Homodimer.</text>
</comment>
<comment type="subcellular location">
    <subcellularLocation>
        <location evidence="1">Cytoplasm</location>
    </subcellularLocation>
</comment>
<sequence>MCGIVGYVGRRPAYVVVMDALRRMEYRGYDSSGIALVDGGTLTVRRRAGRLANLEEAVAEMPSTALSGTTGLGHTRWATHGRPTDRNAHPHRDAAGKIAVVHNGIIENFAVLRRELETAGVEFASDTDTEVAAHLVARAYRHGETADDFVGSVLAVLRRLEGHFTLVFANADDPGTLVAARRSTPLVLGIGDNEMFVGSDVAAFIEHTREAVELGQDQAVVITADGYRISDFDGNDGLQAGRDFRPFHIDWDLAAAEKGGYEYFMLKEIAEQPAAVADTLLGHFVGGRIVLDEQRLSDQELREIDKVFVVACGTAYHSGLLAKYAIEHWTRLPVEVELASEFRYRDPVLDRSTLVVAISQSGETADTLEAVRHAKEQKAKVLAICNTNGSQIPRECDAVLYTRAGPEIGVASTKTFLAQIAANYLLGLALAQARGTKYPDEVEREYHELEAMPDLVARVIAATGPVAELAHRFAQSSTVLFLGRHVGYPVALEGALKLKELAYMHAEGFAAGELKHGPIALIEDGLPVIVVMPSPKGSATLHAKLLSNIREIQTRGAVTIVIAEEGDETVRPYADHLIEIPAVSTLLQPLLSTIPLQVFAASVARARGYDVDKPRNLAKSVTVE</sequence>
<name>GLMS_MYCTO</name>
<reference key="1">
    <citation type="journal article" date="2002" name="J. Bacteriol.">
        <title>Whole-genome comparison of Mycobacterium tuberculosis clinical and laboratory strains.</title>
        <authorList>
            <person name="Fleischmann R.D."/>
            <person name="Alland D."/>
            <person name="Eisen J.A."/>
            <person name="Carpenter L."/>
            <person name="White O."/>
            <person name="Peterson J.D."/>
            <person name="DeBoy R.T."/>
            <person name="Dodson R.J."/>
            <person name="Gwinn M.L."/>
            <person name="Haft D.H."/>
            <person name="Hickey E.K."/>
            <person name="Kolonay J.F."/>
            <person name="Nelson W.C."/>
            <person name="Umayam L.A."/>
            <person name="Ermolaeva M.D."/>
            <person name="Salzberg S.L."/>
            <person name="Delcher A."/>
            <person name="Utterback T.R."/>
            <person name="Weidman J.F."/>
            <person name="Khouri H.M."/>
            <person name="Gill J."/>
            <person name="Mikula A."/>
            <person name="Bishai W."/>
            <person name="Jacobs W.R. Jr."/>
            <person name="Venter J.C."/>
            <person name="Fraser C.M."/>
        </authorList>
    </citation>
    <scope>NUCLEOTIDE SEQUENCE [LARGE SCALE GENOMIC DNA]</scope>
    <source>
        <strain>CDC 1551 / Oshkosh</strain>
    </source>
</reference>
<dbReference type="EC" id="2.6.1.16" evidence="1"/>
<dbReference type="EMBL" id="AE000516">
    <property type="protein sequence ID" value="AAK47882.1"/>
    <property type="molecule type" value="Genomic_DNA"/>
</dbReference>
<dbReference type="PIR" id="B70976">
    <property type="entry name" value="B70976"/>
</dbReference>
<dbReference type="RefSeq" id="WP_003418289.1">
    <property type="nucleotide sequence ID" value="NZ_KK341227.1"/>
</dbReference>
<dbReference type="SMR" id="P9WN48"/>
<dbReference type="KEGG" id="mtc:MT3542"/>
<dbReference type="PATRIC" id="fig|83331.31.peg.3800"/>
<dbReference type="HOGENOM" id="CLU_012520_5_2_11"/>
<dbReference type="Proteomes" id="UP000001020">
    <property type="component" value="Chromosome"/>
</dbReference>
<dbReference type="GO" id="GO:0005829">
    <property type="term" value="C:cytosol"/>
    <property type="evidence" value="ECO:0007669"/>
    <property type="project" value="TreeGrafter"/>
</dbReference>
<dbReference type="GO" id="GO:0097367">
    <property type="term" value="F:carbohydrate derivative binding"/>
    <property type="evidence" value="ECO:0007669"/>
    <property type="project" value="InterPro"/>
</dbReference>
<dbReference type="GO" id="GO:0004360">
    <property type="term" value="F:glutamine-fructose-6-phosphate transaminase (isomerizing) activity"/>
    <property type="evidence" value="ECO:0007669"/>
    <property type="project" value="UniProtKB-UniRule"/>
</dbReference>
<dbReference type="GO" id="GO:0005975">
    <property type="term" value="P:carbohydrate metabolic process"/>
    <property type="evidence" value="ECO:0007669"/>
    <property type="project" value="UniProtKB-UniRule"/>
</dbReference>
<dbReference type="GO" id="GO:0006002">
    <property type="term" value="P:fructose 6-phosphate metabolic process"/>
    <property type="evidence" value="ECO:0007669"/>
    <property type="project" value="TreeGrafter"/>
</dbReference>
<dbReference type="GO" id="GO:0006487">
    <property type="term" value="P:protein N-linked glycosylation"/>
    <property type="evidence" value="ECO:0007669"/>
    <property type="project" value="TreeGrafter"/>
</dbReference>
<dbReference type="GO" id="GO:0006047">
    <property type="term" value="P:UDP-N-acetylglucosamine metabolic process"/>
    <property type="evidence" value="ECO:0007669"/>
    <property type="project" value="TreeGrafter"/>
</dbReference>
<dbReference type="CDD" id="cd00714">
    <property type="entry name" value="GFAT"/>
    <property type="match status" value="1"/>
</dbReference>
<dbReference type="CDD" id="cd05008">
    <property type="entry name" value="SIS_GlmS_GlmD_1"/>
    <property type="match status" value="1"/>
</dbReference>
<dbReference type="CDD" id="cd05009">
    <property type="entry name" value="SIS_GlmS_GlmD_2"/>
    <property type="match status" value="1"/>
</dbReference>
<dbReference type="FunFam" id="3.40.50.10490:FF:000001">
    <property type="entry name" value="Glutamine--fructose-6-phosphate aminotransferase [isomerizing]"/>
    <property type="match status" value="1"/>
</dbReference>
<dbReference type="FunFam" id="3.40.50.10490:FF:000002">
    <property type="entry name" value="Glutamine--fructose-6-phosphate aminotransferase [isomerizing]"/>
    <property type="match status" value="1"/>
</dbReference>
<dbReference type="FunFam" id="3.60.20.10:FF:000006">
    <property type="entry name" value="Glutamine--fructose-6-phosphate aminotransferase [isomerizing]"/>
    <property type="match status" value="1"/>
</dbReference>
<dbReference type="Gene3D" id="3.40.50.10490">
    <property type="entry name" value="Glucose-6-phosphate isomerase like protein, domain 1"/>
    <property type="match status" value="2"/>
</dbReference>
<dbReference type="Gene3D" id="3.60.20.10">
    <property type="entry name" value="Glutamine Phosphoribosylpyrophosphate, subunit 1, domain 1"/>
    <property type="match status" value="1"/>
</dbReference>
<dbReference type="HAMAP" id="MF_00164">
    <property type="entry name" value="GlmS"/>
    <property type="match status" value="1"/>
</dbReference>
<dbReference type="InterPro" id="IPR017932">
    <property type="entry name" value="GATase_2_dom"/>
</dbReference>
<dbReference type="InterPro" id="IPR005855">
    <property type="entry name" value="GFAT"/>
</dbReference>
<dbReference type="InterPro" id="IPR047084">
    <property type="entry name" value="GFAT_N"/>
</dbReference>
<dbReference type="InterPro" id="IPR035466">
    <property type="entry name" value="GlmS/AgaS_SIS"/>
</dbReference>
<dbReference type="InterPro" id="IPR035490">
    <property type="entry name" value="GlmS/FrlB_SIS"/>
</dbReference>
<dbReference type="InterPro" id="IPR029055">
    <property type="entry name" value="Ntn_hydrolases_N"/>
</dbReference>
<dbReference type="InterPro" id="IPR001347">
    <property type="entry name" value="SIS_dom"/>
</dbReference>
<dbReference type="InterPro" id="IPR046348">
    <property type="entry name" value="SIS_dom_sf"/>
</dbReference>
<dbReference type="NCBIfam" id="TIGR01135">
    <property type="entry name" value="glmS"/>
    <property type="match status" value="1"/>
</dbReference>
<dbReference type="NCBIfam" id="NF001484">
    <property type="entry name" value="PRK00331.1"/>
    <property type="match status" value="1"/>
</dbReference>
<dbReference type="PANTHER" id="PTHR10937">
    <property type="entry name" value="GLUCOSAMINE--FRUCTOSE-6-PHOSPHATE AMINOTRANSFERASE, ISOMERIZING"/>
    <property type="match status" value="1"/>
</dbReference>
<dbReference type="PANTHER" id="PTHR10937:SF0">
    <property type="entry name" value="GLUTAMINE--FRUCTOSE-6-PHOSPHATE TRANSAMINASE (ISOMERIZING)"/>
    <property type="match status" value="1"/>
</dbReference>
<dbReference type="Pfam" id="PF13522">
    <property type="entry name" value="GATase_6"/>
    <property type="match status" value="1"/>
</dbReference>
<dbReference type="Pfam" id="PF01380">
    <property type="entry name" value="SIS"/>
    <property type="match status" value="2"/>
</dbReference>
<dbReference type="SUPFAM" id="SSF56235">
    <property type="entry name" value="N-terminal nucleophile aminohydrolases (Ntn hydrolases)"/>
    <property type="match status" value="1"/>
</dbReference>
<dbReference type="SUPFAM" id="SSF53697">
    <property type="entry name" value="SIS domain"/>
    <property type="match status" value="1"/>
</dbReference>
<dbReference type="PROSITE" id="PS51278">
    <property type="entry name" value="GATASE_TYPE_2"/>
    <property type="match status" value="1"/>
</dbReference>
<dbReference type="PROSITE" id="PS51464">
    <property type="entry name" value="SIS"/>
    <property type="match status" value="2"/>
</dbReference>
<protein>
    <recommendedName>
        <fullName evidence="1">Glutamine--fructose-6-phosphate aminotransferase [isomerizing]</fullName>
        <ecNumber evidence="1">2.6.1.16</ecNumber>
    </recommendedName>
    <alternativeName>
        <fullName evidence="1">D-fructose-6-phosphate amidotransferase</fullName>
    </alternativeName>
    <alternativeName>
        <fullName evidence="1">GFAT</fullName>
    </alternativeName>
    <alternativeName>
        <fullName evidence="1">Glucosamine-6-phosphate synthase</fullName>
    </alternativeName>
    <alternativeName>
        <fullName evidence="1">Hexosephosphate aminotransferase</fullName>
    </alternativeName>
    <alternativeName>
        <fullName evidence="1">L-glutamine--D-fructose-6-phosphate amidotransferase</fullName>
    </alternativeName>
</protein>
<gene>
    <name evidence="1" type="primary">glmS</name>
    <name type="ordered locus">MT3542</name>
</gene>
<evidence type="ECO:0000255" key="1">
    <source>
        <dbReference type="HAMAP-Rule" id="MF_00164"/>
    </source>
</evidence>
<organism>
    <name type="scientific">Mycobacterium tuberculosis (strain CDC 1551 / Oshkosh)</name>
    <dbReference type="NCBI Taxonomy" id="83331"/>
    <lineage>
        <taxon>Bacteria</taxon>
        <taxon>Bacillati</taxon>
        <taxon>Actinomycetota</taxon>
        <taxon>Actinomycetes</taxon>
        <taxon>Mycobacteriales</taxon>
        <taxon>Mycobacteriaceae</taxon>
        <taxon>Mycobacterium</taxon>
        <taxon>Mycobacterium tuberculosis complex</taxon>
    </lineage>
</organism>
<keyword id="KW-0032">Aminotransferase</keyword>
<keyword id="KW-0963">Cytoplasm</keyword>
<keyword id="KW-0315">Glutamine amidotransferase</keyword>
<keyword id="KW-1185">Reference proteome</keyword>
<keyword id="KW-0677">Repeat</keyword>
<keyword id="KW-0808">Transferase</keyword>
<proteinExistence type="inferred from homology"/>